<accession>Q09FR1</accession>
<sequence>MIFLTLEHILTHISFSIVSIVITIYLMTLLVHETVGLYDSSEKGLIATFFCITGFLVIRWIYSGHFPLSDLYESLMFLSWSFSIIHMVPYFTNHKNLLSTITAPSAIFTQGFATSGLLTEMHRSTKLVPALQSQWLMMHVSMMILSYAALLCGSLLSIALLVITFRKNVENFGKSKSNPFLIGPFSFGEIKYVNEINNVLRNTFLISFRNFRRYQVIQQLDCWSCRVISLGFIFLTIGILSGAVWANEAWGSYWNWDPKETWAFITWTIFAIYLHTRTNKNLQGINSAIVASIGFLIIWICYFGVNLLGIGLHSYGSFTSN</sequence>
<geneLocation type="chloroplast"/>
<protein>
    <recommendedName>
        <fullName evidence="1">Cytochrome c biogenesis protein CcsA</fullName>
    </recommendedName>
</protein>
<proteinExistence type="inferred from homology"/>
<organism>
    <name type="scientific">Nandina domestica</name>
    <name type="common">Heavenly bamboo</name>
    <dbReference type="NCBI Taxonomy" id="41776"/>
    <lineage>
        <taxon>Eukaryota</taxon>
        <taxon>Viridiplantae</taxon>
        <taxon>Streptophyta</taxon>
        <taxon>Embryophyta</taxon>
        <taxon>Tracheophyta</taxon>
        <taxon>Spermatophyta</taxon>
        <taxon>Magnoliopsida</taxon>
        <taxon>Ranunculales</taxon>
        <taxon>Berberidaceae</taxon>
        <taxon>Nandinoideae</taxon>
        <taxon>Nandineae</taxon>
        <taxon>Nandina</taxon>
    </lineage>
</organism>
<name>CCSA_NANDO</name>
<keyword id="KW-0150">Chloroplast</keyword>
<keyword id="KW-0201">Cytochrome c-type biogenesis</keyword>
<keyword id="KW-0472">Membrane</keyword>
<keyword id="KW-0934">Plastid</keyword>
<keyword id="KW-0793">Thylakoid</keyword>
<keyword id="KW-0812">Transmembrane</keyword>
<keyword id="KW-1133">Transmembrane helix</keyword>
<gene>
    <name evidence="1" type="primary">ccsA</name>
</gene>
<comment type="function">
    <text evidence="1">Required during biogenesis of c-type cytochromes (cytochrome c6 and cytochrome f) at the step of heme attachment.</text>
</comment>
<comment type="subunit">
    <text evidence="1">May interact with Ccs1.</text>
</comment>
<comment type="subcellular location">
    <subcellularLocation>
        <location evidence="1">Plastid</location>
        <location evidence="1">Chloroplast thylakoid membrane</location>
        <topology evidence="1">Multi-pass membrane protein</topology>
    </subcellularLocation>
</comment>
<comment type="similarity">
    <text evidence="1">Belongs to the CcmF/CycK/Ccl1/NrfE/CcsA family.</text>
</comment>
<reference key="1">
    <citation type="journal article" date="2006" name="BMC Plant Biol.">
        <title>Rapid and accurate pyrosequencing of angiosperm plastid genomes.</title>
        <authorList>
            <person name="Moore M.J."/>
            <person name="Dhingra A."/>
            <person name="Soltis P.S."/>
            <person name="Shaw R."/>
            <person name="Farmerie W.G."/>
            <person name="Folta K.M."/>
            <person name="Soltis D.E."/>
        </authorList>
    </citation>
    <scope>NUCLEOTIDE SEQUENCE [LARGE SCALE GENOMIC DNA]</scope>
</reference>
<evidence type="ECO:0000255" key="1">
    <source>
        <dbReference type="HAMAP-Rule" id="MF_01391"/>
    </source>
</evidence>
<feature type="chain" id="PRO_0000353770" description="Cytochrome c biogenesis protein CcsA">
    <location>
        <begin position="1"/>
        <end position="321"/>
    </location>
</feature>
<feature type="transmembrane region" description="Helical" evidence="1">
    <location>
        <begin position="9"/>
        <end position="29"/>
    </location>
</feature>
<feature type="transmembrane region" description="Helical" evidence="1">
    <location>
        <begin position="44"/>
        <end position="64"/>
    </location>
</feature>
<feature type="transmembrane region" description="Helical" evidence="1">
    <location>
        <begin position="71"/>
        <end position="91"/>
    </location>
</feature>
<feature type="transmembrane region" description="Helical" evidence="1">
    <location>
        <begin position="97"/>
        <end position="117"/>
    </location>
</feature>
<feature type="transmembrane region" description="Helical" evidence="1">
    <location>
        <begin position="143"/>
        <end position="163"/>
    </location>
</feature>
<feature type="transmembrane region" description="Helical" evidence="1">
    <location>
        <begin position="227"/>
        <end position="247"/>
    </location>
</feature>
<feature type="transmembrane region" description="Helical" evidence="1">
    <location>
        <begin position="261"/>
        <end position="275"/>
    </location>
</feature>
<feature type="transmembrane region" description="Helical" evidence="1">
    <location>
        <begin position="288"/>
        <end position="308"/>
    </location>
</feature>
<dbReference type="EMBL" id="DQ923117">
    <property type="protein sequence ID" value="ABI49914.1"/>
    <property type="molecule type" value="Genomic_DNA"/>
</dbReference>
<dbReference type="RefSeq" id="YP_740700.1">
    <property type="nucleotide sequence ID" value="NC_008336.1"/>
</dbReference>
<dbReference type="SMR" id="Q09FR1"/>
<dbReference type="GeneID" id="4271648"/>
<dbReference type="GO" id="GO:0009535">
    <property type="term" value="C:chloroplast thylakoid membrane"/>
    <property type="evidence" value="ECO:0007669"/>
    <property type="project" value="UniProtKB-SubCell"/>
</dbReference>
<dbReference type="GO" id="GO:0005886">
    <property type="term" value="C:plasma membrane"/>
    <property type="evidence" value="ECO:0007669"/>
    <property type="project" value="TreeGrafter"/>
</dbReference>
<dbReference type="GO" id="GO:0020037">
    <property type="term" value="F:heme binding"/>
    <property type="evidence" value="ECO:0007669"/>
    <property type="project" value="InterPro"/>
</dbReference>
<dbReference type="GO" id="GO:0017004">
    <property type="term" value="P:cytochrome complex assembly"/>
    <property type="evidence" value="ECO:0007669"/>
    <property type="project" value="UniProtKB-UniRule"/>
</dbReference>
<dbReference type="HAMAP" id="MF_01391">
    <property type="entry name" value="CytC_CcsA"/>
    <property type="match status" value="1"/>
</dbReference>
<dbReference type="InterPro" id="IPR002541">
    <property type="entry name" value="Cyt_c_assembly"/>
</dbReference>
<dbReference type="InterPro" id="IPR017562">
    <property type="entry name" value="Cyt_c_biogenesis_CcsA"/>
</dbReference>
<dbReference type="InterPro" id="IPR045062">
    <property type="entry name" value="Cyt_c_biogenesis_CcsA/CcmC"/>
</dbReference>
<dbReference type="NCBIfam" id="TIGR03144">
    <property type="entry name" value="cytochr_II_ccsB"/>
    <property type="match status" value="1"/>
</dbReference>
<dbReference type="PANTHER" id="PTHR30071:SF1">
    <property type="entry name" value="CYTOCHROME B_B6 PROTEIN-RELATED"/>
    <property type="match status" value="1"/>
</dbReference>
<dbReference type="PANTHER" id="PTHR30071">
    <property type="entry name" value="HEME EXPORTER PROTEIN C"/>
    <property type="match status" value="1"/>
</dbReference>
<dbReference type="Pfam" id="PF01578">
    <property type="entry name" value="Cytochrom_C_asm"/>
    <property type="match status" value="1"/>
</dbReference>